<organism>
    <name type="scientific">Clavibacter michiganensis subsp. michiganensis (strain NCPPB 382)</name>
    <dbReference type="NCBI Taxonomy" id="443906"/>
    <lineage>
        <taxon>Bacteria</taxon>
        <taxon>Bacillati</taxon>
        <taxon>Actinomycetota</taxon>
        <taxon>Actinomycetes</taxon>
        <taxon>Micrococcales</taxon>
        <taxon>Microbacteriaceae</taxon>
        <taxon>Clavibacter</taxon>
    </lineage>
</organism>
<keyword id="KW-0687">Ribonucleoprotein</keyword>
<keyword id="KW-0689">Ribosomal protein</keyword>
<reference key="1">
    <citation type="journal article" date="2008" name="J. Bacteriol.">
        <title>The genome sequence of the tomato-pathogenic actinomycete Clavibacter michiganensis subsp. michiganensis NCPPB382 reveals a large island involved in pathogenicity.</title>
        <authorList>
            <person name="Gartemann K.-H."/>
            <person name="Abt B."/>
            <person name="Bekel T."/>
            <person name="Burger A."/>
            <person name="Engemann J."/>
            <person name="Fluegel M."/>
            <person name="Gaigalat L."/>
            <person name="Goesmann A."/>
            <person name="Graefen I."/>
            <person name="Kalinowski J."/>
            <person name="Kaup O."/>
            <person name="Kirchner O."/>
            <person name="Krause L."/>
            <person name="Linke B."/>
            <person name="McHardy A."/>
            <person name="Meyer F."/>
            <person name="Pohle S."/>
            <person name="Rueckert C."/>
            <person name="Schneiker S."/>
            <person name="Zellermann E.-M."/>
            <person name="Puehler A."/>
            <person name="Eichenlaub R."/>
            <person name="Kaiser O."/>
            <person name="Bartels D."/>
        </authorList>
    </citation>
    <scope>NUCLEOTIDE SEQUENCE [LARGE SCALE GENOMIC DNA]</scope>
    <source>
        <strain>NCPPB 382</strain>
    </source>
</reference>
<gene>
    <name evidence="1" type="primary">rpmE2</name>
    <name type="ordered locus">CMM_1716</name>
</gene>
<protein>
    <recommendedName>
        <fullName evidence="1">Large ribosomal subunit protein bL31B</fullName>
    </recommendedName>
    <alternativeName>
        <fullName evidence="2">50S ribosomal protein L31 type B</fullName>
    </alternativeName>
</protein>
<accession>A5CRQ9</accession>
<comment type="subunit">
    <text evidence="1">Part of the 50S ribosomal subunit.</text>
</comment>
<comment type="similarity">
    <text evidence="1">Belongs to the bacterial ribosomal protein bL31 family. Type B subfamily.</text>
</comment>
<name>RL31B_CLAM3</name>
<dbReference type="EMBL" id="AM711867">
    <property type="protein sequence ID" value="CAN01770.1"/>
    <property type="molecule type" value="Genomic_DNA"/>
</dbReference>
<dbReference type="RefSeq" id="WP_012038404.1">
    <property type="nucleotide sequence ID" value="NC_009480.1"/>
</dbReference>
<dbReference type="SMR" id="A5CRQ9"/>
<dbReference type="GeneID" id="92947702"/>
<dbReference type="KEGG" id="cmi:CMM_1716"/>
<dbReference type="eggNOG" id="COG0254">
    <property type="taxonomic scope" value="Bacteria"/>
</dbReference>
<dbReference type="HOGENOM" id="CLU_114306_2_2_11"/>
<dbReference type="OrthoDB" id="9803251at2"/>
<dbReference type="Proteomes" id="UP000001564">
    <property type="component" value="Chromosome"/>
</dbReference>
<dbReference type="GO" id="GO:1990904">
    <property type="term" value="C:ribonucleoprotein complex"/>
    <property type="evidence" value="ECO:0007669"/>
    <property type="project" value="UniProtKB-KW"/>
</dbReference>
<dbReference type="GO" id="GO:0005840">
    <property type="term" value="C:ribosome"/>
    <property type="evidence" value="ECO:0007669"/>
    <property type="project" value="UniProtKB-KW"/>
</dbReference>
<dbReference type="GO" id="GO:0003735">
    <property type="term" value="F:structural constituent of ribosome"/>
    <property type="evidence" value="ECO:0007669"/>
    <property type="project" value="InterPro"/>
</dbReference>
<dbReference type="GO" id="GO:0006412">
    <property type="term" value="P:translation"/>
    <property type="evidence" value="ECO:0007669"/>
    <property type="project" value="UniProtKB-UniRule"/>
</dbReference>
<dbReference type="Gene3D" id="4.10.830.30">
    <property type="entry name" value="Ribosomal protein L31"/>
    <property type="match status" value="1"/>
</dbReference>
<dbReference type="HAMAP" id="MF_00502">
    <property type="entry name" value="Ribosomal_bL31_2"/>
    <property type="match status" value="1"/>
</dbReference>
<dbReference type="InterPro" id="IPR034704">
    <property type="entry name" value="Ribosomal_bL28/bL31-like_sf"/>
</dbReference>
<dbReference type="InterPro" id="IPR002150">
    <property type="entry name" value="Ribosomal_bL31"/>
</dbReference>
<dbReference type="InterPro" id="IPR027493">
    <property type="entry name" value="Ribosomal_bL31_B"/>
</dbReference>
<dbReference type="InterPro" id="IPR042105">
    <property type="entry name" value="Ribosomal_bL31_sf"/>
</dbReference>
<dbReference type="NCBIfam" id="TIGR00105">
    <property type="entry name" value="L31"/>
    <property type="match status" value="1"/>
</dbReference>
<dbReference type="NCBIfam" id="NF002462">
    <property type="entry name" value="PRK01678.1"/>
    <property type="match status" value="1"/>
</dbReference>
<dbReference type="PANTHER" id="PTHR33280">
    <property type="entry name" value="50S RIBOSOMAL PROTEIN L31, CHLOROPLASTIC"/>
    <property type="match status" value="1"/>
</dbReference>
<dbReference type="PANTHER" id="PTHR33280:SF1">
    <property type="entry name" value="LARGE RIBOSOMAL SUBUNIT PROTEIN BL31C"/>
    <property type="match status" value="1"/>
</dbReference>
<dbReference type="Pfam" id="PF01197">
    <property type="entry name" value="Ribosomal_L31"/>
    <property type="match status" value="1"/>
</dbReference>
<dbReference type="PRINTS" id="PR01249">
    <property type="entry name" value="RIBOSOMALL31"/>
</dbReference>
<dbReference type="SUPFAM" id="SSF143800">
    <property type="entry name" value="L28p-like"/>
    <property type="match status" value="1"/>
</dbReference>
<dbReference type="PROSITE" id="PS01143">
    <property type="entry name" value="RIBOSOMAL_L31"/>
    <property type="match status" value="1"/>
</dbReference>
<sequence length="85" mass="9512">MKTDIHPKYAPVVFRDLASGATFLTRSTVSSSKTIEWEDGNTYAVIDVEISSESHPFYTGKQRIMDSAGRVEKFNSRYAGFGTKK</sequence>
<proteinExistence type="inferred from homology"/>
<feature type="chain" id="PRO_1000126797" description="Large ribosomal subunit protein bL31B">
    <location>
        <begin position="1"/>
        <end position="85"/>
    </location>
</feature>
<evidence type="ECO:0000255" key="1">
    <source>
        <dbReference type="HAMAP-Rule" id="MF_00502"/>
    </source>
</evidence>
<evidence type="ECO:0000305" key="2"/>